<sequence>MSFNQSRSDKNEGYTQYRKSGRSNNFNPQRGSSGTHSKPGGAGGSAPTSSIASNRSFKKTNNAQGGQSRGGLPAVNSTDSSNAPNPRGVQNGAVAKPPEGPHSQRSTRDVPKAPTSQSAPLSSDGPAPTTPAKGTGDQPKEFAFQFGSISPGFMNGMQLPVRTSSAPPNLDEQKRDQARHESFRPVPPMPIPLAPKPQTQRKDTGAGDQPNVGQQLQQKDTGIINQPNTGDAHTVQKAKKDMQASPNHPTNQTQKPTTPMSGISMTMPYHPPQVPVPFGGPNQQMQSQGLTPTSLHMSIPVPLQIGSSPQVQQPMFVPGLHPHPMQPQGIIHQGQGLGFATQIGSQLPPQLSNLGMNVTSQYPQQQGGKFGGPRKSAVRITDPKTHEELIFDNKQSNAYADTGTSGPRPPYNLPSQTQPLPYAPSHAMNYYPNSYNPNPLYFASPSSLPLPSGQSAPNSQPHRFNYPVSQGSQNVPYIDMHVKKPSGGPMHGISDPPNREHTRDTHTFQPPAPSGTVHVTIKMPTDPTGGKGSDTLPNKLPTTEEGKSQKPSSPSVDLIPPSQRAVDTTSESSLHDSKLGREPSGIKSSPVISKQFTDGPPMVSLESQDSSSVQSSLTASSEESELAVAHSEVRRENLLGSDLHKDHQKKTSKKGYAQSLQHQISGQASSALGVPCQVQDTTSPLVSEAVEAKSLIIPAVVGGKSVSVSAVTSDPLESKDAGLVSVAHSSSPENPGLGNVKNLDLISDDNQDTSSKEKNSEPVVLKIEEQGQATFSEPPVDLKNSENVLDHDVSKSVEVAEKTERNLIVSSATVSNEVLTSETAQRAVDEPVSCNAEADVSASVSSSSTVPENSQDDKLVVDSSGRYDNMSSNEVLKNVVKSDQPSEPALNPGLSEGKNDGEVLDTVGTCANSSQGVSGTKDKSVVETSRVKGTTGKAKKRLKAILQMADAAGTTSDLYNAYKRPEEKKETVAHSESIERTESRSSSVDTEQESNEAIKEDAGALSKAEPDDWEDAADIATPDLESANGDGVGTSMLDSGDRTGDMAKKYSRDFLLKFAEQFLDLPHNFEVTSDIESLMSTHTNVSHHHDRDPYPSPGRVDRPSSGGSRLDRRGSNLVDDDRWSKLPGPFAPGQDPRLDLAYGATAGFRPGQGPNFGVLRNPRAQAPVQYAGGILAGPMQSMGPQGGLQRNNSDADRWQRATNFQKGLIPSPLTPLQTMHKAKKKYEVGKVSDEEETKQRQLKAILNKLTPQNFEKLFEQVKAVNIDNGRTLTGVISQIFDKALMEPTFCEMYANFCFHLAGELPDLSEDNEKITFKRLLLNKCQEEFERGEREQEEANKVEEEGEVKQSEEEREEKRIKARRRMLGNIRLIGELYKKKMLTERIMHECIKKLLGEYQNPDEEDVEALCKLMSTIGEMIDHPRAKDYMDSYFEIMTMLSNNMKLSSRVRFMLKDAIDLRKNKWQQRRKVEGPKKIEEVHRDAAQERQAQTGRFGRGPSINSSARRGGPPMDYGPRGSVVSSPGNQMGGFRAFLHQPRGYGGNQDARQDERQSYEARTLSVTSQRAGGDESITLGPQGGLARGMSIRGPQPSSAAPADMSPLPGDLRSAPIASLNGYSSASERATLTSKEDLISRHMPERFAGPTSMDHISSPERYSNYGNKDLRHSGRSFDRSRPISPATPPGPALTPSLPSEKVLSEDRLQQLSLTAIKEFYSARDEKEVALCIKELNSPAFHPTMISLWVTDVFERTNLERDLLAKLVVNLSRPNNGTLNQAHLVKGFEAVLGNLEDSVNDAPRAPEYLGQILGKVITESMVSLREVADLICQGGEVPGNLLQSGLGADVLGNILKTIKTEKGEGFLTDLRTNSNLRLETFLPPDPVKSRVLEEFI</sequence>
<keyword id="KW-0002">3D-structure</keyword>
<keyword id="KW-0025">Alternative splicing</keyword>
<keyword id="KW-0396">Initiation factor</keyword>
<keyword id="KW-0648">Protein biosynthesis</keyword>
<keyword id="KW-1185">Reference proteome</keyword>
<keyword id="KW-0694">RNA-binding</keyword>
<keyword id="KW-0810">Translation regulation</keyword>
<accession>A0A1S3C4H6</accession>
<accession>A0A1S3C501</accession>
<proteinExistence type="evidence at protein level"/>
<gene>
    <name evidence="7" type="primary">eIF4G</name>
    <name evidence="9" type="ORF">LOC103496918</name>
</gene>
<protein>
    <recommendedName>
        <fullName evidence="8">Eukaryotic translation initiation factor 4G</fullName>
        <shortName evidence="8">eIF-4G</shortName>
        <shortName evidence="8">eIF4G</shortName>
    </recommendedName>
    <alternativeName>
        <fullName evidence="8">Protein synthesis initiation factor 4G</fullName>
    </alternativeName>
</protein>
<feature type="chain" id="PRO_0000454072" description="Eukaryotic translation initiation factor 4G">
    <location>
        <begin position="1"/>
        <end position="1888"/>
    </location>
</feature>
<feature type="domain" description="MIF4G" evidence="2">
    <location>
        <begin position="1239"/>
        <end position="1462"/>
    </location>
</feature>
<feature type="domain" description="MI" evidence="3">
    <location>
        <begin position="1700"/>
        <end position="1824"/>
    </location>
</feature>
<feature type="region of interest" description="Disordered" evidence="4">
    <location>
        <begin position="1"/>
        <end position="259"/>
    </location>
</feature>
<feature type="region of interest" description="Disordered" evidence="4">
    <location>
        <begin position="391"/>
        <end position="420"/>
    </location>
</feature>
<feature type="region of interest" description="Disordered" evidence="4">
    <location>
        <begin position="449"/>
        <end position="662"/>
    </location>
</feature>
<feature type="region of interest" description="Disordered" evidence="4">
    <location>
        <begin position="726"/>
        <end position="761"/>
    </location>
</feature>
<feature type="region of interest" description="Disordered" evidence="4">
    <location>
        <begin position="838"/>
        <end position="903"/>
    </location>
</feature>
<feature type="region of interest" description="Disordered" evidence="4">
    <location>
        <begin position="961"/>
        <end position="1042"/>
    </location>
</feature>
<feature type="region of interest" description="EIF4E-binding" evidence="5 10">
    <location>
        <begin position="1048"/>
        <end position="1093"/>
    </location>
</feature>
<feature type="region of interest" description="Disordered" evidence="4">
    <location>
        <begin position="1083"/>
        <end position="1138"/>
    </location>
</feature>
<feature type="region of interest" description="Disordered" evidence="4">
    <location>
        <begin position="1331"/>
        <end position="1356"/>
    </location>
</feature>
<feature type="region of interest" description="Disordered" evidence="4">
    <location>
        <begin position="1462"/>
        <end position="1605"/>
    </location>
</feature>
<feature type="region of interest" description="Disordered" evidence="4">
    <location>
        <begin position="1639"/>
        <end position="1691"/>
    </location>
</feature>
<feature type="compositionally biased region" description="Polar residues" evidence="4">
    <location>
        <begin position="13"/>
        <end position="36"/>
    </location>
</feature>
<feature type="compositionally biased region" description="Polar residues" evidence="4">
    <location>
        <begin position="75"/>
        <end position="84"/>
    </location>
</feature>
<feature type="compositionally biased region" description="Basic and acidic residues" evidence="4">
    <location>
        <begin position="171"/>
        <end position="183"/>
    </location>
</feature>
<feature type="compositionally biased region" description="Pro residues" evidence="4">
    <location>
        <begin position="185"/>
        <end position="195"/>
    </location>
</feature>
<feature type="compositionally biased region" description="Polar residues" evidence="4">
    <location>
        <begin position="211"/>
        <end position="231"/>
    </location>
</feature>
<feature type="compositionally biased region" description="Polar residues" evidence="4">
    <location>
        <begin position="244"/>
        <end position="259"/>
    </location>
</feature>
<feature type="compositionally biased region" description="Polar residues" evidence="4">
    <location>
        <begin position="393"/>
        <end position="405"/>
    </location>
</feature>
<feature type="compositionally biased region" description="Polar residues" evidence="4">
    <location>
        <begin position="458"/>
        <end position="475"/>
    </location>
</feature>
<feature type="compositionally biased region" description="Basic and acidic residues" evidence="4">
    <location>
        <begin position="497"/>
        <end position="506"/>
    </location>
</feature>
<feature type="compositionally biased region" description="Polar residues" evidence="4">
    <location>
        <begin position="586"/>
        <end position="596"/>
    </location>
</feature>
<feature type="compositionally biased region" description="Low complexity" evidence="4">
    <location>
        <begin position="603"/>
        <end position="630"/>
    </location>
</feature>
<feature type="compositionally biased region" description="Basic and acidic residues" evidence="4">
    <location>
        <begin position="631"/>
        <end position="645"/>
    </location>
</feature>
<feature type="compositionally biased region" description="Low complexity" evidence="4">
    <location>
        <begin position="840"/>
        <end position="850"/>
    </location>
</feature>
<feature type="compositionally biased region" description="Polar residues" evidence="4">
    <location>
        <begin position="869"/>
        <end position="885"/>
    </location>
</feature>
<feature type="compositionally biased region" description="Basic and acidic residues" evidence="4">
    <location>
        <begin position="963"/>
        <end position="983"/>
    </location>
</feature>
<feature type="compositionally biased region" description="Basic and acidic residues" evidence="4">
    <location>
        <begin position="1109"/>
        <end position="1124"/>
    </location>
</feature>
<feature type="compositionally biased region" description="Basic and acidic residues" evidence="4">
    <location>
        <begin position="1467"/>
        <end position="1484"/>
    </location>
</feature>
<feature type="compositionally biased region" description="Basic and acidic residues" evidence="4">
    <location>
        <begin position="1661"/>
        <end position="1674"/>
    </location>
</feature>
<feature type="splice variant" id="VSP_061242" description="In isoform 2.">
    <location>
        <begin position="92"/>
        <end position="93"/>
    </location>
</feature>
<feature type="mutagenesis site" description="Impaired eIF4E binding; when associated with A-1055, A-1056, D-1069, D-1075 and D-1078." evidence="5">
    <original>Y</original>
    <variation>A</variation>
    <location>
        <position position="1050"/>
    </location>
</feature>
<feature type="mutagenesis site" description="Impaired eIF4E binding; when associated with A-1050, A-1056, D-1069, D-1075 and D-1078." evidence="5">
    <original>L</original>
    <variation>A</variation>
    <location>
        <position position="1055"/>
    </location>
</feature>
<feature type="mutagenesis site" description="Impaired eIF4E binding; when associated with A-1050, A-1055, D-1069, D-1075 and D-1078." evidence="5">
    <original>L</original>
    <variation>A</variation>
    <location>
        <position position="1056"/>
    </location>
</feature>
<feature type="mutagenesis site" description="Impaired eIF4E binding; when associated with A-1050, A-1055, A-1056, D-1075 and D-1078." evidence="5">
    <original>F</original>
    <variation>D</variation>
    <location>
        <position position="1069"/>
    </location>
</feature>
<feature type="mutagenesis site" description="Impaired eIF4E binding; when associated with A-1050, A-1055, A-1056, D-1069 and D-1078." evidence="5">
    <original>I</original>
    <variation>D</variation>
    <location>
        <position position="1075"/>
    </location>
</feature>
<feature type="mutagenesis site" description="Impaired eIF4E binding; when associated with A-1050, A-1055, A-1056, D-1069 and D-1075." evidence="5">
    <original>L</original>
    <variation>D</variation>
    <location>
        <position position="1078"/>
    </location>
</feature>
<feature type="helix" evidence="11">
    <location>
        <begin position="1052"/>
        <end position="1057"/>
    </location>
</feature>
<feature type="helix" evidence="11">
    <location>
        <begin position="1058"/>
        <end position="1061"/>
    </location>
</feature>
<feature type="helix" evidence="11">
    <location>
        <begin position="1073"/>
        <end position="1078"/>
    </location>
</feature>
<evidence type="ECO:0000250" key="1">
    <source>
        <dbReference type="UniProtKB" id="Q76E23"/>
    </source>
</evidence>
<evidence type="ECO:0000255" key="2"/>
<evidence type="ECO:0000255" key="3">
    <source>
        <dbReference type="PROSITE-ProRule" id="PRU00698"/>
    </source>
</evidence>
<evidence type="ECO:0000256" key="4">
    <source>
        <dbReference type="SAM" id="MobiDB-lite"/>
    </source>
</evidence>
<evidence type="ECO:0000269" key="5">
    <source>
    </source>
</evidence>
<evidence type="ECO:0000303" key="6">
    <source>
    </source>
</evidence>
<evidence type="ECO:0000303" key="7">
    <source>
    </source>
</evidence>
<evidence type="ECO:0000305" key="8"/>
<evidence type="ECO:0000312" key="9">
    <source>
        <dbReference type="RefSeq" id="XP_008457179.1"/>
    </source>
</evidence>
<evidence type="ECO:0007744" key="10">
    <source>
        <dbReference type="PDB" id="5ME5"/>
    </source>
</evidence>
<evidence type="ECO:0007829" key="11">
    <source>
        <dbReference type="PDB" id="5ME5"/>
    </source>
</evidence>
<name>IF4G_CUCME</name>
<reference key="1">
    <citation type="journal article" date="2012" name="Proc. Natl. Acad. Sci. U.S.A.">
        <title>The genome of melon (Cucumis melo L.).</title>
        <authorList>
            <person name="Garcia-Mas J."/>
            <person name="Benjak A."/>
            <person name="Sanseverino W."/>
            <person name="Bourgeois M."/>
            <person name="Mir G."/>
            <person name="Gonzalez V.M."/>
            <person name="Henaff E."/>
            <person name="Camara F."/>
            <person name="Cozzuto L."/>
            <person name="Lowy E."/>
            <person name="Alioto T."/>
            <person name="Capella-Gutierrez S."/>
            <person name="Blanca J."/>
            <person name="Canizares J."/>
            <person name="Ziarsolo P."/>
            <person name="Gonzalez-Ibeas D."/>
            <person name="Rodriguez-Moreno L."/>
            <person name="Droege M."/>
            <person name="Du L."/>
            <person name="Alvarez-Tejado M."/>
            <person name="Lorente-Galdos B."/>
            <person name="Mele M."/>
            <person name="Yang L."/>
            <person name="Weng Y."/>
            <person name="Navarro A."/>
            <person name="Marques-Bonet T."/>
            <person name="Aranda M.A."/>
            <person name="Nuez F."/>
            <person name="Pico B."/>
            <person name="Gabaldon T."/>
            <person name="Roma G."/>
            <person name="Guigo R."/>
            <person name="Casacuberta J.M."/>
            <person name="Arus P."/>
            <person name="Puigdomenech P."/>
        </authorList>
    </citation>
    <scope>NUCLEOTIDE SEQUENCE [LARGE SCALE GENOMIC DNA] (ISOFORMS 1 AND 2)</scope>
    <source>
        <strain>cv. DHL92</strain>
    </source>
</reference>
<reference key="2">
    <citation type="journal article" date="2017" name="Plant Physiol.">
        <title>Structure of eIF4E in Complex with an eIF4G Peptide Supports a Universal Bipartite Binding Mode for Protein Translation.</title>
        <authorList>
            <person name="Miras M."/>
            <person name="Truniger V."/>
            <person name="Silva C."/>
            <person name="Verdaguer N."/>
            <person name="Aranda M.A."/>
            <person name="Querol-Audi J."/>
        </authorList>
    </citation>
    <scope>X-RAY CRYSTALLOGRAPHY (1.90 ANGSTROMS) OF 995-1084 IN COMPLEX WITH EIF4E</scope>
    <scope>MUTAGENESIS OF TYR-1050; LEU-1055; LEU-1056; PHE-1069; ILE-1075 AND LEU-1078</scope>
    <scope>INTERACTION WITH EIF4E</scope>
    <source>
        <strain>cv. C46</strain>
    </source>
</reference>
<comment type="function">
    <text evidence="1">Component of the protein complex eIF4F, which is involved in the recognition of the mRNA cap, ATP-dependent unwinding of 5'-terminal secondary structure and recruitment of mRNA to the ribosome.</text>
</comment>
<comment type="subunit">
    <text evidence="1 5">EIF4F is a multi-subunit complex, the composition of which varies with external and internal environmental conditions. It is composed of at least EIF4A, EIF4E and EIF4G (By similarity). Interacts directly with eIF4E (PubMed:28522457). In higher plants two isoforms of EIF4F have been identified, named isoform EIF4F and isoform EIF(iso)4F. Isoform EIF4F has subunits p220 and p26, whereas isoform EIF(iso)4F has subunits p82 and p28 (By similarity).</text>
</comment>
<comment type="alternative products">
    <event type="alternative splicing"/>
    <isoform>
        <id>A0A1S3C4H6-1</id>
        <name>1</name>
        <name evidence="6">X1</name>
        <sequence type="displayed"/>
    </isoform>
    <isoform>
        <id>A0A1S3C4H6-2</id>
        <name>2</name>
        <name evidence="6">X2</name>
        <sequence type="described" ref="VSP_061242"/>
    </isoform>
</comment>
<comment type="similarity">
    <text evidence="8">Belongs to the eukaryotic initiation factor 4G family.</text>
</comment>
<organism>
    <name type="scientific">Cucumis melo</name>
    <name type="common">Muskmelon</name>
    <dbReference type="NCBI Taxonomy" id="3656"/>
    <lineage>
        <taxon>Eukaryota</taxon>
        <taxon>Viridiplantae</taxon>
        <taxon>Streptophyta</taxon>
        <taxon>Embryophyta</taxon>
        <taxon>Tracheophyta</taxon>
        <taxon>Spermatophyta</taxon>
        <taxon>Magnoliopsida</taxon>
        <taxon>eudicotyledons</taxon>
        <taxon>Gunneridae</taxon>
        <taxon>Pentapetalae</taxon>
        <taxon>rosids</taxon>
        <taxon>fabids</taxon>
        <taxon>Cucurbitales</taxon>
        <taxon>Cucurbitaceae</taxon>
        <taxon>Benincaseae</taxon>
        <taxon>Cucumis</taxon>
    </lineage>
</organism>
<dbReference type="RefSeq" id="XP_008457179.1">
    <property type="nucleotide sequence ID" value="XM_008458957.2"/>
</dbReference>
<dbReference type="PDB" id="5ME5">
    <property type="method" value="X-ray"/>
    <property type="resolution" value="1.90 A"/>
    <property type="chains" value="B=995-1084"/>
</dbReference>
<dbReference type="PDBsum" id="5ME5"/>
<dbReference type="SMR" id="A0A1S3C4H6"/>
<dbReference type="FunCoup" id="A0A1S3C4H6">
    <property type="interactions" value="2592"/>
</dbReference>
<dbReference type="GeneID" id="103496918"/>
<dbReference type="KEGG" id="cmo:103496918"/>
<dbReference type="eggNOG" id="KOG0401">
    <property type="taxonomic scope" value="Eukaryota"/>
</dbReference>
<dbReference type="InParanoid" id="A0A1S3C4H6"/>
<dbReference type="Proteomes" id="UP000089565">
    <property type="component" value="Unplaced"/>
</dbReference>
<dbReference type="Proteomes" id="UP000596662">
    <property type="component" value="Unplaced"/>
</dbReference>
<dbReference type="GO" id="GO:0016281">
    <property type="term" value="C:eukaryotic translation initiation factor 4F complex"/>
    <property type="evidence" value="ECO:0007669"/>
    <property type="project" value="TreeGrafter"/>
</dbReference>
<dbReference type="GO" id="GO:0003729">
    <property type="term" value="F:mRNA binding"/>
    <property type="evidence" value="ECO:0007669"/>
    <property type="project" value="TreeGrafter"/>
</dbReference>
<dbReference type="GO" id="GO:0003743">
    <property type="term" value="F:translation initiation factor activity"/>
    <property type="evidence" value="ECO:0007669"/>
    <property type="project" value="UniProtKB-KW"/>
</dbReference>
<dbReference type="GO" id="GO:0006417">
    <property type="term" value="P:regulation of translation"/>
    <property type="evidence" value="ECO:0007669"/>
    <property type="project" value="UniProtKB-KW"/>
</dbReference>
<dbReference type="FunFam" id="1.25.40.180:FF:000024">
    <property type="entry name" value="Eukaryotic translation initiation factor 4G"/>
    <property type="match status" value="1"/>
</dbReference>
<dbReference type="FunFam" id="1.25.40.180:FF:000034">
    <property type="entry name" value="Eukaryotic translation initiation factor 4G"/>
    <property type="match status" value="1"/>
</dbReference>
<dbReference type="Gene3D" id="1.25.40.180">
    <property type="match status" value="2"/>
</dbReference>
<dbReference type="InterPro" id="IPR016024">
    <property type="entry name" value="ARM-type_fold"/>
</dbReference>
<dbReference type="InterPro" id="IPR003891">
    <property type="entry name" value="Initiation_fac_eIF4g_MI"/>
</dbReference>
<dbReference type="InterPro" id="IPR003890">
    <property type="entry name" value="MIF4G-like_typ-3"/>
</dbReference>
<dbReference type="PANTHER" id="PTHR23253">
    <property type="entry name" value="EUKARYOTIC TRANSLATION INITIATION FACTOR 4 GAMMA"/>
    <property type="match status" value="1"/>
</dbReference>
<dbReference type="PANTHER" id="PTHR23253:SF9">
    <property type="entry name" value="EUKARYOTIC TRANSLATION INITIATION FACTOR 4 GAMMA 2"/>
    <property type="match status" value="1"/>
</dbReference>
<dbReference type="Pfam" id="PF02847">
    <property type="entry name" value="MA3"/>
    <property type="match status" value="1"/>
</dbReference>
<dbReference type="Pfam" id="PF02854">
    <property type="entry name" value="MIF4G"/>
    <property type="match status" value="1"/>
</dbReference>
<dbReference type="SMART" id="SM00544">
    <property type="entry name" value="MA3"/>
    <property type="match status" value="1"/>
</dbReference>
<dbReference type="SMART" id="SM00543">
    <property type="entry name" value="MIF4G"/>
    <property type="match status" value="1"/>
</dbReference>
<dbReference type="SUPFAM" id="SSF48371">
    <property type="entry name" value="ARM repeat"/>
    <property type="match status" value="2"/>
</dbReference>
<dbReference type="PROSITE" id="PS51366">
    <property type="entry name" value="MI"/>
    <property type="match status" value="1"/>
</dbReference>